<proteinExistence type="inferred from homology"/>
<organism>
    <name type="scientific">Coxiella burnetii (strain Dugway 5J108-111)</name>
    <dbReference type="NCBI Taxonomy" id="434922"/>
    <lineage>
        <taxon>Bacteria</taxon>
        <taxon>Pseudomonadati</taxon>
        <taxon>Pseudomonadota</taxon>
        <taxon>Gammaproteobacteria</taxon>
        <taxon>Legionellales</taxon>
        <taxon>Coxiellaceae</taxon>
        <taxon>Coxiella</taxon>
    </lineage>
</organism>
<dbReference type="EC" id="2.7.4.3" evidence="1"/>
<dbReference type="EMBL" id="CP000733">
    <property type="protein sequence ID" value="ABS76478.1"/>
    <property type="molecule type" value="Genomic_DNA"/>
</dbReference>
<dbReference type="RefSeq" id="WP_005771364.1">
    <property type="nucleotide sequence ID" value="NC_009727.1"/>
</dbReference>
<dbReference type="SMR" id="A9KED8"/>
<dbReference type="KEGG" id="cbd:CBUD_1620"/>
<dbReference type="HOGENOM" id="CLU_032354_1_2_6"/>
<dbReference type="UniPathway" id="UPA00588">
    <property type="reaction ID" value="UER00649"/>
</dbReference>
<dbReference type="Proteomes" id="UP000008555">
    <property type="component" value="Chromosome"/>
</dbReference>
<dbReference type="GO" id="GO:0005737">
    <property type="term" value="C:cytoplasm"/>
    <property type="evidence" value="ECO:0007669"/>
    <property type="project" value="UniProtKB-SubCell"/>
</dbReference>
<dbReference type="GO" id="GO:0004017">
    <property type="term" value="F:adenylate kinase activity"/>
    <property type="evidence" value="ECO:0007669"/>
    <property type="project" value="UniProtKB-UniRule"/>
</dbReference>
<dbReference type="GO" id="GO:0005524">
    <property type="term" value="F:ATP binding"/>
    <property type="evidence" value="ECO:0007669"/>
    <property type="project" value="UniProtKB-UniRule"/>
</dbReference>
<dbReference type="GO" id="GO:0044209">
    <property type="term" value="P:AMP salvage"/>
    <property type="evidence" value="ECO:0007669"/>
    <property type="project" value="UniProtKB-UniRule"/>
</dbReference>
<dbReference type="CDD" id="cd01428">
    <property type="entry name" value="ADK"/>
    <property type="match status" value="1"/>
</dbReference>
<dbReference type="FunFam" id="3.40.50.300:FF:000106">
    <property type="entry name" value="Adenylate kinase mitochondrial"/>
    <property type="match status" value="1"/>
</dbReference>
<dbReference type="Gene3D" id="3.40.50.300">
    <property type="entry name" value="P-loop containing nucleotide triphosphate hydrolases"/>
    <property type="match status" value="1"/>
</dbReference>
<dbReference type="HAMAP" id="MF_00235">
    <property type="entry name" value="Adenylate_kinase_Adk"/>
    <property type="match status" value="1"/>
</dbReference>
<dbReference type="InterPro" id="IPR006259">
    <property type="entry name" value="Adenyl_kin_sub"/>
</dbReference>
<dbReference type="InterPro" id="IPR000850">
    <property type="entry name" value="Adenylat/UMP-CMP_kin"/>
</dbReference>
<dbReference type="InterPro" id="IPR033690">
    <property type="entry name" value="Adenylat_kinase_CS"/>
</dbReference>
<dbReference type="InterPro" id="IPR007862">
    <property type="entry name" value="Adenylate_kinase_lid-dom"/>
</dbReference>
<dbReference type="InterPro" id="IPR027417">
    <property type="entry name" value="P-loop_NTPase"/>
</dbReference>
<dbReference type="NCBIfam" id="TIGR01351">
    <property type="entry name" value="adk"/>
    <property type="match status" value="1"/>
</dbReference>
<dbReference type="NCBIfam" id="NF001379">
    <property type="entry name" value="PRK00279.1-1"/>
    <property type="match status" value="1"/>
</dbReference>
<dbReference type="NCBIfam" id="NF001380">
    <property type="entry name" value="PRK00279.1-2"/>
    <property type="match status" value="1"/>
</dbReference>
<dbReference type="NCBIfam" id="NF001381">
    <property type="entry name" value="PRK00279.1-3"/>
    <property type="match status" value="1"/>
</dbReference>
<dbReference type="NCBIfam" id="NF011100">
    <property type="entry name" value="PRK14527.1"/>
    <property type="match status" value="1"/>
</dbReference>
<dbReference type="PANTHER" id="PTHR23359">
    <property type="entry name" value="NUCLEOTIDE KINASE"/>
    <property type="match status" value="1"/>
</dbReference>
<dbReference type="Pfam" id="PF00406">
    <property type="entry name" value="ADK"/>
    <property type="match status" value="1"/>
</dbReference>
<dbReference type="Pfam" id="PF05191">
    <property type="entry name" value="ADK_lid"/>
    <property type="match status" value="1"/>
</dbReference>
<dbReference type="PRINTS" id="PR00094">
    <property type="entry name" value="ADENYLTKNASE"/>
</dbReference>
<dbReference type="SUPFAM" id="SSF52540">
    <property type="entry name" value="P-loop containing nucleoside triphosphate hydrolases"/>
    <property type="match status" value="1"/>
</dbReference>
<dbReference type="PROSITE" id="PS00113">
    <property type="entry name" value="ADENYLATE_KINASE"/>
    <property type="match status" value="1"/>
</dbReference>
<reference key="1">
    <citation type="journal article" date="2009" name="Infect. Immun.">
        <title>Comparative genomics reveal extensive transposon-mediated genomic plasticity and diversity among potential effector proteins within the genus Coxiella.</title>
        <authorList>
            <person name="Beare P.A."/>
            <person name="Unsworth N."/>
            <person name="Andoh M."/>
            <person name="Voth D.E."/>
            <person name="Omsland A."/>
            <person name="Gilk S.D."/>
            <person name="Williams K.P."/>
            <person name="Sobral B.W."/>
            <person name="Kupko J.J. III"/>
            <person name="Porcella S.F."/>
            <person name="Samuel J.E."/>
            <person name="Heinzen R.A."/>
        </authorList>
    </citation>
    <scope>NUCLEOTIDE SEQUENCE [LARGE SCALE GENOMIC DNA]</scope>
    <source>
        <strain>Dugway 5J108-111</strain>
    </source>
</reference>
<name>KAD_COXBN</name>
<sequence>MPLRIILLGLPGAGKGTQADFIAKHLDIPKISTGDMLRAAVKAKTPLGLEVKKIMESGGLVSDEIMIALVKERVKLPDCHKGYLLDGFPRTLAQADALNAAAIKIDLVIEIDVPEEEIIERMTGRLIHPASGRTYHRRYNPPKVADKDDVTGEPLIQRADDREETVRHRLAVYRKQTSPLSDYYAQWEKSGDPQAPKYFRISGLGSMEEVRERILQVFEAYDPRDSGNLEH</sequence>
<accession>A9KED8</accession>
<feature type="chain" id="PRO_1000078270" description="Adenylate kinase">
    <location>
        <begin position="1"/>
        <end position="231"/>
    </location>
</feature>
<feature type="region of interest" description="NMP" evidence="1">
    <location>
        <begin position="32"/>
        <end position="61"/>
    </location>
</feature>
<feature type="region of interest" description="LID" evidence="1">
    <location>
        <begin position="124"/>
        <end position="161"/>
    </location>
</feature>
<feature type="binding site" evidence="1">
    <location>
        <begin position="12"/>
        <end position="17"/>
    </location>
    <ligand>
        <name>ATP</name>
        <dbReference type="ChEBI" id="CHEBI:30616"/>
    </ligand>
</feature>
<feature type="binding site" evidence="1">
    <location>
        <position position="33"/>
    </location>
    <ligand>
        <name>AMP</name>
        <dbReference type="ChEBI" id="CHEBI:456215"/>
    </ligand>
</feature>
<feature type="binding site" evidence="1">
    <location>
        <position position="38"/>
    </location>
    <ligand>
        <name>AMP</name>
        <dbReference type="ChEBI" id="CHEBI:456215"/>
    </ligand>
</feature>
<feature type="binding site" evidence="1">
    <location>
        <begin position="59"/>
        <end position="61"/>
    </location>
    <ligand>
        <name>AMP</name>
        <dbReference type="ChEBI" id="CHEBI:456215"/>
    </ligand>
</feature>
<feature type="binding site" evidence="1">
    <location>
        <begin position="87"/>
        <end position="90"/>
    </location>
    <ligand>
        <name>AMP</name>
        <dbReference type="ChEBI" id="CHEBI:456215"/>
    </ligand>
</feature>
<feature type="binding site" evidence="1">
    <location>
        <position position="94"/>
    </location>
    <ligand>
        <name>AMP</name>
        <dbReference type="ChEBI" id="CHEBI:456215"/>
    </ligand>
</feature>
<feature type="binding site" evidence="1">
    <location>
        <position position="125"/>
    </location>
    <ligand>
        <name>ATP</name>
        <dbReference type="ChEBI" id="CHEBI:30616"/>
    </ligand>
</feature>
<feature type="binding site" evidence="1">
    <location>
        <begin position="134"/>
        <end position="135"/>
    </location>
    <ligand>
        <name>ATP</name>
        <dbReference type="ChEBI" id="CHEBI:30616"/>
    </ligand>
</feature>
<feature type="binding site" evidence="1">
    <location>
        <position position="158"/>
    </location>
    <ligand>
        <name>AMP</name>
        <dbReference type="ChEBI" id="CHEBI:456215"/>
    </ligand>
</feature>
<feature type="binding site" evidence="1">
    <location>
        <position position="169"/>
    </location>
    <ligand>
        <name>AMP</name>
        <dbReference type="ChEBI" id="CHEBI:456215"/>
    </ligand>
</feature>
<feature type="binding site" evidence="1">
    <location>
        <position position="205"/>
    </location>
    <ligand>
        <name>ATP</name>
        <dbReference type="ChEBI" id="CHEBI:30616"/>
    </ligand>
</feature>
<keyword id="KW-0067">ATP-binding</keyword>
<keyword id="KW-0963">Cytoplasm</keyword>
<keyword id="KW-0418">Kinase</keyword>
<keyword id="KW-0545">Nucleotide biosynthesis</keyword>
<keyword id="KW-0547">Nucleotide-binding</keyword>
<keyword id="KW-0808">Transferase</keyword>
<protein>
    <recommendedName>
        <fullName evidence="1">Adenylate kinase</fullName>
        <shortName evidence="1">AK</shortName>
        <ecNumber evidence="1">2.7.4.3</ecNumber>
    </recommendedName>
    <alternativeName>
        <fullName evidence="1">ATP-AMP transphosphorylase</fullName>
    </alternativeName>
    <alternativeName>
        <fullName evidence="1">ATP:AMP phosphotransferase</fullName>
    </alternativeName>
    <alternativeName>
        <fullName evidence="1">Adenylate monophosphate kinase</fullName>
    </alternativeName>
</protein>
<gene>
    <name evidence="1" type="primary">adk</name>
    <name type="ordered locus">CBUD_1620</name>
</gene>
<evidence type="ECO:0000255" key="1">
    <source>
        <dbReference type="HAMAP-Rule" id="MF_00235"/>
    </source>
</evidence>
<comment type="function">
    <text evidence="1">Catalyzes the reversible transfer of the terminal phosphate group between ATP and AMP. Plays an important role in cellular energy homeostasis and in adenine nucleotide metabolism.</text>
</comment>
<comment type="catalytic activity">
    <reaction evidence="1">
        <text>AMP + ATP = 2 ADP</text>
        <dbReference type="Rhea" id="RHEA:12973"/>
        <dbReference type="ChEBI" id="CHEBI:30616"/>
        <dbReference type="ChEBI" id="CHEBI:456215"/>
        <dbReference type="ChEBI" id="CHEBI:456216"/>
        <dbReference type="EC" id="2.7.4.3"/>
    </reaction>
</comment>
<comment type="pathway">
    <text evidence="1">Purine metabolism; AMP biosynthesis via salvage pathway; AMP from ADP: step 1/1.</text>
</comment>
<comment type="subunit">
    <text evidence="1">Monomer.</text>
</comment>
<comment type="subcellular location">
    <subcellularLocation>
        <location evidence="1">Cytoplasm</location>
    </subcellularLocation>
</comment>
<comment type="domain">
    <text evidence="1">Consists of three domains, a large central CORE domain and two small peripheral domains, NMPbind and LID, which undergo movements during catalysis. The LID domain closes over the site of phosphoryl transfer upon ATP binding. Assembling and dissambling the active center during each catalytic cycle provides an effective means to prevent ATP hydrolysis.</text>
</comment>
<comment type="similarity">
    <text evidence="1">Belongs to the adenylate kinase family.</text>
</comment>